<comment type="function">
    <text evidence="3">Transcription factor. Involved in the control of tapetum development. Required for male fertility and pollen differentiation, especially during callose deposition.</text>
</comment>
<comment type="subunit">
    <text evidence="5">Homodimer.</text>
</comment>
<comment type="subcellular location">
    <subcellularLocation>
        <location evidence="1">Nucleus</location>
    </subcellularLocation>
</comment>
<comment type="tissue specificity">
    <text evidence="3">Mostly expressed in anthers, and, to a lower extent, in young inflorescences undergoing meiosis and siliques.</text>
</comment>
<comment type="developmental stage">
    <text evidence="3">First observed in floral meristem and early anther primordia. Later detected in archesporial cells. From stage 4 to early stage 5, weakly expressed in precursors of the middle layer, tapetum and meiocytes. Strongly expressed in the tapetum from late anther stage 5 to early stage 6, and at a lower level in meiocytes.</text>
</comment>
<keyword id="KW-0217">Developmental protein</keyword>
<keyword id="KW-0238">DNA-binding</keyword>
<keyword id="KW-0539">Nucleus</keyword>
<keyword id="KW-1185">Reference proteome</keyword>
<keyword id="KW-0804">Transcription</keyword>
<keyword id="KW-0805">Transcription regulation</keyword>
<sequence>MGGGSRFQEPVRMSRRKQVTKEKEEDENFKSPNLEAERRRREKLHCRLMALRSHVPIVTNMTKASIVEDAITYIGELQNNVKNLLETFHEMEEAPPEIDEEQTDPMIKPEVETSDLNEEMKKLGIEENVQLCKIGERKFWLKIITEKRDGIFTKFMEVMRFLGFEIIDISLTTSNGAILISASVQTQELCDVEQTKDFLLEVMRSNP</sequence>
<dbReference type="EMBL" id="EF637083">
    <property type="protein sequence ID" value="ABV21209.1"/>
    <property type="molecule type" value="Genomic_DNA"/>
</dbReference>
<dbReference type="EMBL" id="AL031187">
    <property type="protein sequence ID" value="CAA20198.1"/>
    <property type="molecule type" value="Genomic_DNA"/>
</dbReference>
<dbReference type="EMBL" id="AL161554">
    <property type="protein sequence ID" value="CAB79132.1"/>
    <property type="molecule type" value="Genomic_DNA"/>
</dbReference>
<dbReference type="EMBL" id="CP002687">
    <property type="protein sequence ID" value="AEE84442.1"/>
    <property type="molecule type" value="Genomic_DNA"/>
</dbReference>
<dbReference type="PIR" id="T05175">
    <property type="entry name" value="T05175"/>
</dbReference>
<dbReference type="RefSeq" id="NP_193864.1">
    <property type="nucleotide sequence ID" value="NM_118253.1"/>
</dbReference>
<dbReference type="SMR" id="O81900"/>
<dbReference type="BioGRID" id="13174">
    <property type="interactions" value="5"/>
</dbReference>
<dbReference type="FunCoup" id="O81900">
    <property type="interactions" value="121"/>
</dbReference>
<dbReference type="STRING" id="3702.O81900"/>
<dbReference type="PaxDb" id="3702-AT4G21330.1"/>
<dbReference type="EnsemblPlants" id="AT4G21330.1">
    <property type="protein sequence ID" value="AT4G21330.1"/>
    <property type="gene ID" value="AT4G21330"/>
</dbReference>
<dbReference type="GeneID" id="827883"/>
<dbReference type="Gramene" id="AT4G21330.1">
    <property type="protein sequence ID" value="AT4G21330.1"/>
    <property type="gene ID" value="AT4G21330"/>
</dbReference>
<dbReference type="KEGG" id="ath:AT4G21330"/>
<dbReference type="Araport" id="AT4G21330"/>
<dbReference type="TAIR" id="AT4G21330">
    <property type="gene designation" value="DYT1"/>
</dbReference>
<dbReference type="eggNOG" id="ENOG502S0WD">
    <property type="taxonomic scope" value="Eukaryota"/>
</dbReference>
<dbReference type="HOGENOM" id="CLU_083457_0_0_1"/>
<dbReference type="InParanoid" id="O81900"/>
<dbReference type="OMA" id="ATENMPH"/>
<dbReference type="PhylomeDB" id="O81900"/>
<dbReference type="PRO" id="PR:O81900"/>
<dbReference type="Proteomes" id="UP000006548">
    <property type="component" value="Chromosome 4"/>
</dbReference>
<dbReference type="GO" id="GO:0005634">
    <property type="term" value="C:nucleus"/>
    <property type="evidence" value="ECO:0000314"/>
    <property type="project" value="TAIR"/>
</dbReference>
<dbReference type="GO" id="GO:0003700">
    <property type="term" value="F:DNA-binding transcription factor activity"/>
    <property type="evidence" value="ECO:0000314"/>
    <property type="project" value="TAIR"/>
</dbReference>
<dbReference type="GO" id="GO:0046983">
    <property type="term" value="F:protein dimerization activity"/>
    <property type="evidence" value="ECO:0007669"/>
    <property type="project" value="InterPro"/>
</dbReference>
<dbReference type="GO" id="GO:0043565">
    <property type="term" value="F:sequence-specific DNA binding"/>
    <property type="evidence" value="ECO:0000353"/>
    <property type="project" value="TAIR"/>
</dbReference>
<dbReference type="GO" id="GO:0048658">
    <property type="term" value="P:anther wall tapetum development"/>
    <property type="evidence" value="ECO:0000315"/>
    <property type="project" value="TAIR"/>
</dbReference>
<dbReference type="GO" id="GO:0006355">
    <property type="term" value="P:regulation of DNA-templated transcription"/>
    <property type="evidence" value="ECO:0000315"/>
    <property type="project" value="TAIR"/>
</dbReference>
<dbReference type="CDD" id="cd11450">
    <property type="entry name" value="bHLH_AtFIT_like"/>
    <property type="match status" value="1"/>
</dbReference>
<dbReference type="Gene3D" id="4.10.280.10">
    <property type="entry name" value="Helix-loop-helix DNA-binding domain"/>
    <property type="match status" value="1"/>
</dbReference>
<dbReference type="InterPro" id="IPR011598">
    <property type="entry name" value="bHLH_dom"/>
</dbReference>
<dbReference type="InterPro" id="IPR036638">
    <property type="entry name" value="HLH_DNA-bd_sf"/>
</dbReference>
<dbReference type="InterPro" id="IPR051358">
    <property type="entry name" value="TF_AMS/ICE1/BHLH6-like"/>
</dbReference>
<dbReference type="PANTHER" id="PTHR31945:SF20">
    <property type="entry name" value="TRANSCRIPTION FACTOR DYT1"/>
    <property type="match status" value="1"/>
</dbReference>
<dbReference type="PANTHER" id="PTHR31945">
    <property type="entry name" value="TRANSCRIPTION FACTOR SCREAM2-RELATED"/>
    <property type="match status" value="1"/>
</dbReference>
<dbReference type="Pfam" id="PF00010">
    <property type="entry name" value="HLH"/>
    <property type="match status" value="1"/>
</dbReference>
<dbReference type="SMART" id="SM00353">
    <property type="entry name" value="HLH"/>
    <property type="match status" value="1"/>
</dbReference>
<dbReference type="SUPFAM" id="SSF47459">
    <property type="entry name" value="HLH, helix-loop-helix DNA-binding domain"/>
    <property type="match status" value="1"/>
</dbReference>
<dbReference type="PROSITE" id="PS50888">
    <property type="entry name" value="BHLH"/>
    <property type="match status" value="1"/>
</dbReference>
<accession>O81900</accession>
<accession>A7Y5V9</accession>
<name>DYT1_ARATH</name>
<gene>
    <name evidence="4" type="primary">DYT1</name>
    <name type="synonym">BHLH22</name>
    <name type="synonym">EN49</name>
    <name type="ordered locus">At4g21330</name>
    <name type="ORF">T6K22.60</name>
</gene>
<reference key="1">
    <citation type="journal article" date="2006" name="Development">
        <title>Regulation of Arabidopsis tapetum development and function by DYSFUNCTIONAL TAPETUM1 (DYT1) encoding a putative bHLH transcription factor.</title>
        <authorList>
            <person name="Zhang W."/>
            <person name="Sun Y."/>
            <person name="Timofejeva L."/>
            <person name="Chen C."/>
            <person name="Grossniklaus U."/>
            <person name="Ma H."/>
        </authorList>
    </citation>
    <scope>NUCLEOTIDE SEQUENCE [MRNA]</scope>
    <scope>FUNCTION</scope>
    <scope>TISSUE SPECIFICITY</scope>
    <scope>DEVELOPMENTAL STAGE</scope>
    <source>
        <strain>cv. Landsberg erecta</strain>
    </source>
</reference>
<reference key="2">
    <citation type="journal article" date="2007" name="Science">
        <title>The evolution of selfing in Arabidopsis thaliana.</title>
        <authorList>
            <person name="Tang C."/>
            <person name="Toomajian C."/>
            <person name="Sherman-Broyles S."/>
            <person name="Plagnol V."/>
            <person name="Guo Y.-L."/>
            <person name="Hu T.T."/>
            <person name="Clark R.M."/>
            <person name="Nasrallah J.B."/>
            <person name="Weigel D."/>
            <person name="Nordborg M."/>
        </authorList>
    </citation>
    <scope>NUCLEOTIDE SEQUENCE [GENOMIC DNA]</scope>
    <source>
        <strain>cv. Cvi-0</strain>
    </source>
</reference>
<reference key="3">
    <citation type="journal article" date="1999" name="Nature">
        <title>Sequence and analysis of chromosome 4 of the plant Arabidopsis thaliana.</title>
        <authorList>
            <person name="Mayer K.F.X."/>
            <person name="Schueller C."/>
            <person name="Wambutt R."/>
            <person name="Murphy G."/>
            <person name="Volckaert G."/>
            <person name="Pohl T."/>
            <person name="Duesterhoeft A."/>
            <person name="Stiekema W."/>
            <person name="Entian K.-D."/>
            <person name="Terryn N."/>
            <person name="Harris B."/>
            <person name="Ansorge W."/>
            <person name="Brandt P."/>
            <person name="Grivell L.A."/>
            <person name="Rieger M."/>
            <person name="Weichselgartner M."/>
            <person name="de Simone V."/>
            <person name="Obermaier B."/>
            <person name="Mache R."/>
            <person name="Mueller M."/>
            <person name="Kreis M."/>
            <person name="Delseny M."/>
            <person name="Puigdomenech P."/>
            <person name="Watson M."/>
            <person name="Schmidtheini T."/>
            <person name="Reichert B."/>
            <person name="Portetelle D."/>
            <person name="Perez-Alonso M."/>
            <person name="Boutry M."/>
            <person name="Bancroft I."/>
            <person name="Vos P."/>
            <person name="Hoheisel J."/>
            <person name="Zimmermann W."/>
            <person name="Wedler H."/>
            <person name="Ridley P."/>
            <person name="Langham S.-A."/>
            <person name="McCullagh B."/>
            <person name="Bilham L."/>
            <person name="Robben J."/>
            <person name="van der Schueren J."/>
            <person name="Grymonprez B."/>
            <person name="Chuang Y.-J."/>
            <person name="Vandenbussche F."/>
            <person name="Braeken M."/>
            <person name="Weltjens I."/>
            <person name="Voet M."/>
            <person name="Bastiaens I."/>
            <person name="Aert R."/>
            <person name="Defoor E."/>
            <person name="Weitzenegger T."/>
            <person name="Bothe G."/>
            <person name="Ramsperger U."/>
            <person name="Hilbert H."/>
            <person name="Braun M."/>
            <person name="Holzer E."/>
            <person name="Brandt A."/>
            <person name="Peters S."/>
            <person name="van Staveren M."/>
            <person name="Dirkse W."/>
            <person name="Mooijman P."/>
            <person name="Klein Lankhorst R."/>
            <person name="Rose M."/>
            <person name="Hauf J."/>
            <person name="Koetter P."/>
            <person name="Berneiser S."/>
            <person name="Hempel S."/>
            <person name="Feldpausch M."/>
            <person name="Lamberth S."/>
            <person name="Van den Daele H."/>
            <person name="De Keyser A."/>
            <person name="Buysshaert C."/>
            <person name="Gielen J."/>
            <person name="Villarroel R."/>
            <person name="De Clercq R."/>
            <person name="van Montagu M."/>
            <person name="Rogers J."/>
            <person name="Cronin A."/>
            <person name="Quail M.A."/>
            <person name="Bray-Allen S."/>
            <person name="Clark L."/>
            <person name="Doggett J."/>
            <person name="Hall S."/>
            <person name="Kay M."/>
            <person name="Lennard N."/>
            <person name="McLay K."/>
            <person name="Mayes R."/>
            <person name="Pettett A."/>
            <person name="Rajandream M.A."/>
            <person name="Lyne M."/>
            <person name="Benes V."/>
            <person name="Rechmann S."/>
            <person name="Borkova D."/>
            <person name="Bloecker H."/>
            <person name="Scharfe M."/>
            <person name="Grimm M."/>
            <person name="Loehnert T.-H."/>
            <person name="Dose S."/>
            <person name="de Haan M."/>
            <person name="Maarse A.C."/>
            <person name="Schaefer M."/>
            <person name="Mueller-Auer S."/>
            <person name="Gabel C."/>
            <person name="Fuchs M."/>
            <person name="Fartmann B."/>
            <person name="Granderath K."/>
            <person name="Dauner D."/>
            <person name="Herzl A."/>
            <person name="Neumann S."/>
            <person name="Argiriou A."/>
            <person name="Vitale D."/>
            <person name="Liguori R."/>
            <person name="Piravandi E."/>
            <person name="Massenet O."/>
            <person name="Quigley F."/>
            <person name="Clabauld G."/>
            <person name="Muendlein A."/>
            <person name="Felber R."/>
            <person name="Schnabl S."/>
            <person name="Hiller R."/>
            <person name="Schmidt W."/>
            <person name="Lecharny A."/>
            <person name="Aubourg S."/>
            <person name="Chefdor F."/>
            <person name="Cooke R."/>
            <person name="Berger C."/>
            <person name="Monfort A."/>
            <person name="Casacuberta E."/>
            <person name="Gibbons T."/>
            <person name="Weber N."/>
            <person name="Vandenbol M."/>
            <person name="Bargues M."/>
            <person name="Terol J."/>
            <person name="Torres A."/>
            <person name="Perez-Perez A."/>
            <person name="Purnelle B."/>
            <person name="Bent E."/>
            <person name="Johnson S."/>
            <person name="Tacon D."/>
            <person name="Jesse T."/>
            <person name="Heijnen L."/>
            <person name="Schwarz S."/>
            <person name="Scholler P."/>
            <person name="Heber S."/>
            <person name="Francs P."/>
            <person name="Bielke C."/>
            <person name="Frishman D."/>
            <person name="Haase D."/>
            <person name="Lemcke K."/>
            <person name="Mewes H.-W."/>
            <person name="Stocker S."/>
            <person name="Zaccaria P."/>
            <person name="Bevan M."/>
            <person name="Wilson R.K."/>
            <person name="de la Bastide M."/>
            <person name="Habermann K."/>
            <person name="Parnell L."/>
            <person name="Dedhia N."/>
            <person name="Gnoj L."/>
            <person name="Schutz K."/>
            <person name="Huang E."/>
            <person name="Spiegel L."/>
            <person name="Sekhon M."/>
            <person name="Murray J."/>
            <person name="Sheet P."/>
            <person name="Cordes M."/>
            <person name="Abu-Threideh J."/>
            <person name="Stoneking T."/>
            <person name="Kalicki J."/>
            <person name="Graves T."/>
            <person name="Harmon G."/>
            <person name="Edwards J."/>
            <person name="Latreille P."/>
            <person name="Courtney L."/>
            <person name="Cloud J."/>
            <person name="Abbott A."/>
            <person name="Scott K."/>
            <person name="Johnson D."/>
            <person name="Minx P."/>
            <person name="Bentley D."/>
            <person name="Fulton B."/>
            <person name="Miller N."/>
            <person name="Greco T."/>
            <person name="Kemp K."/>
            <person name="Kramer J."/>
            <person name="Fulton L."/>
            <person name="Mardis E."/>
            <person name="Dante M."/>
            <person name="Pepin K."/>
            <person name="Hillier L.W."/>
            <person name="Nelson J."/>
            <person name="Spieth J."/>
            <person name="Ryan E."/>
            <person name="Andrews S."/>
            <person name="Geisel C."/>
            <person name="Layman D."/>
            <person name="Du H."/>
            <person name="Ali J."/>
            <person name="Berghoff A."/>
            <person name="Jones K."/>
            <person name="Drone K."/>
            <person name="Cotton M."/>
            <person name="Joshu C."/>
            <person name="Antonoiu B."/>
            <person name="Zidanic M."/>
            <person name="Strong C."/>
            <person name="Sun H."/>
            <person name="Lamar B."/>
            <person name="Yordan C."/>
            <person name="Ma P."/>
            <person name="Zhong J."/>
            <person name="Preston R."/>
            <person name="Vil D."/>
            <person name="Shekher M."/>
            <person name="Matero A."/>
            <person name="Shah R."/>
            <person name="Swaby I.K."/>
            <person name="O'Shaughnessy A."/>
            <person name="Rodriguez M."/>
            <person name="Hoffman J."/>
            <person name="Till S."/>
            <person name="Granat S."/>
            <person name="Shohdy N."/>
            <person name="Hasegawa A."/>
            <person name="Hameed A."/>
            <person name="Lodhi M."/>
            <person name="Johnson A."/>
            <person name="Chen E."/>
            <person name="Marra M.A."/>
            <person name="Martienssen R."/>
            <person name="McCombie W.R."/>
        </authorList>
    </citation>
    <scope>NUCLEOTIDE SEQUENCE [LARGE SCALE GENOMIC DNA]</scope>
    <source>
        <strain>cv. Columbia</strain>
    </source>
</reference>
<reference key="4">
    <citation type="journal article" date="2017" name="Plant J.">
        <title>Araport11: a complete reannotation of the Arabidopsis thaliana reference genome.</title>
        <authorList>
            <person name="Cheng C.Y."/>
            <person name="Krishnakumar V."/>
            <person name="Chan A.P."/>
            <person name="Thibaud-Nissen F."/>
            <person name="Schobel S."/>
            <person name="Town C.D."/>
        </authorList>
    </citation>
    <scope>GENOME REANNOTATION</scope>
    <source>
        <strain>cv. Columbia</strain>
    </source>
</reference>
<reference key="5">
    <citation type="journal article" date="2003" name="Mol. Biol. Evol.">
        <title>The basic helix-loop-helix transcription factor family in plants: a genome-wide study of protein structure and functional diversity.</title>
        <authorList>
            <person name="Heim M.A."/>
            <person name="Jakoby M."/>
            <person name="Werber M."/>
            <person name="Martin C."/>
            <person name="Weisshaar B."/>
            <person name="Bailey P.C."/>
        </authorList>
    </citation>
    <scope>GENE FAMILY</scope>
    <scope>NOMENCLATURE</scope>
</reference>
<reference key="6">
    <citation type="journal article" date="2003" name="Plant Cell">
        <title>The Arabidopsis basic/helix-loop-helix transcription factor family.</title>
        <authorList>
            <person name="Toledo-Ortiz G."/>
            <person name="Huq E."/>
            <person name="Quail P.H."/>
        </authorList>
    </citation>
    <scope>GENE FAMILY</scope>
</reference>
<reference key="7">
    <citation type="journal article" date="2003" name="Plant Cell">
        <title>Update on the basic helix-loop-helix transcription factor gene family in Arabidopsis thaliana.</title>
        <authorList>
            <person name="Bailey P.C."/>
            <person name="Martin C."/>
            <person name="Toledo-Ortiz G."/>
            <person name="Quail P.H."/>
            <person name="Huq E."/>
            <person name="Heim M.A."/>
            <person name="Jakoby M."/>
            <person name="Werber M."/>
            <person name="Weisshaar B."/>
        </authorList>
    </citation>
    <scope>GENE FAMILY</scope>
    <scope>NOMENCLATURE</scope>
</reference>
<feature type="chain" id="PRO_0000358842" description="Transcription factor DYT1">
    <location>
        <begin position="1"/>
        <end position="207"/>
    </location>
</feature>
<feature type="domain" description="bHLH" evidence="1">
    <location>
        <begin position="28"/>
        <end position="77"/>
    </location>
</feature>
<feature type="region of interest" description="Disordered" evidence="2">
    <location>
        <begin position="1"/>
        <end position="38"/>
    </location>
</feature>
<feature type="sequence conflict" description="In Ref. 1; ABV21209." evidence="5" ref="1">
    <original>G</original>
    <variation>R</variation>
    <location>
        <position position="3"/>
    </location>
</feature>
<proteinExistence type="evidence at transcript level"/>
<organism>
    <name type="scientific">Arabidopsis thaliana</name>
    <name type="common">Mouse-ear cress</name>
    <dbReference type="NCBI Taxonomy" id="3702"/>
    <lineage>
        <taxon>Eukaryota</taxon>
        <taxon>Viridiplantae</taxon>
        <taxon>Streptophyta</taxon>
        <taxon>Embryophyta</taxon>
        <taxon>Tracheophyta</taxon>
        <taxon>Spermatophyta</taxon>
        <taxon>Magnoliopsida</taxon>
        <taxon>eudicotyledons</taxon>
        <taxon>Gunneridae</taxon>
        <taxon>Pentapetalae</taxon>
        <taxon>rosids</taxon>
        <taxon>malvids</taxon>
        <taxon>Brassicales</taxon>
        <taxon>Brassicaceae</taxon>
        <taxon>Camelineae</taxon>
        <taxon>Arabidopsis</taxon>
    </lineage>
</organism>
<evidence type="ECO:0000255" key="1">
    <source>
        <dbReference type="PROSITE-ProRule" id="PRU00981"/>
    </source>
</evidence>
<evidence type="ECO:0000256" key="2">
    <source>
        <dbReference type="SAM" id="MobiDB-lite"/>
    </source>
</evidence>
<evidence type="ECO:0000269" key="3">
    <source>
    </source>
</evidence>
<evidence type="ECO:0000303" key="4">
    <source>
    </source>
</evidence>
<evidence type="ECO:0000305" key="5"/>
<protein>
    <recommendedName>
        <fullName evidence="5">Transcription factor DYT1</fullName>
    </recommendedName>
    <alternativeName>
        <fullName>Basic helix-loop-helix protein 22</fullName>
        <shortName>AtbHLH22</shortName>
        <shortName>bHLH 22</shortName>
    </alternativeName>
    <alternativeName>
        <fullName evidence="4">Protein DYSFUNCTIONAL TAPETUM 1</fullName>
    </alternativeName>
    <alternativeName>
        <fullName>Transcription factor EN 49</fullName>
    </alternativeName>
    <alternativeName>
        <fullName>bHLH transcription factor bHLH022</fullName>
    </alternativeName>
</protein>